<gene>
    <name evidence="1" type="primary">mnmA</name>
    <name type="synonym">trmU</name>
    <name type="ordered locus">SG1085</name>
</gene>
<dbReference type="EC" id="2.8.1.13" evidence="1"/>
<dbReference type="EMBL" id="AP008232">
    <property type="protein sequence ID" value="BAE74360.1"/>
    <property type="molecule type" value="Genomic_DNA"/>
</dbReference>
<dbReference type="RefSeq" id="WP_011410945.1">
    <property type="nucleotide sequence ID" value="NC_007712.1"/>
</dbReference>
<dbReference type="SMR" id="Q2NU15"/>
<dbReference type="STRING" id="343509.SG1085"/>
<dbReference type="KEGG" id="sgl:SG1085"/>
<dbReference type="eggNOG" id="COG0482">
    <property type="taxonomic scope" value="Bacteria"/>
</dbReference>
<dbReference type="HOGENOM" id="CLU_035188_1_0_6"/>
<dbReference type="OrthoDB" id="9800696at2"/>
<dbReference type="BioCyc" id="SGLO343509:SGP1_RS09295-MONOMER"/>
<dbReference type="Proteomes" id="UP000001932">
    <property type="component" value="Chromosome"/>
</dbReference>
<dbReference type="GO" id="GO:0005737">
    <property type="term" value="C:cytoplasm"/>
    <property type="evidence" value="ECO:0007669"/>
    <property type="project" value="UniProtKB-SubCell"/>
</dbReference>
<dbReference type="GO" id="GO:0005524">
    <property type="term" value="F:ATP binding"/>
    <property type="evidence" value="ECO:0007669"/>
    <property type="project" value="UniProtKB-KW"/>
</dbReference>
<dbReference type="GO" id="GO:0000049">
    <property type="term" value="F:tRNA binding"/>
    <property type="evidence" value="ECO:0007669"/>
    <property type="project" value="UniProtKB-KW"/>
</dbReference>
<dbReference type="GO" id="GO:0103016">
    <property type="term" value="F:tRNA-uridine 2-sulfurtransferase activity"/>
    <property type="evidence" value="ECO:0007669"/>
    <property type="project" value="UniProtKB-EC"/>
</dbReference>
<dbReference type="GO" id="GO:0002143">
    <property type="term" value="P:tRNA wobble position uridine thiolation"/>
    <property type="evidence" value="ECO:0007669"/>
    <property type="project" value="TreeGrafter"/>
</dbReference>
<dbReference type="CDD" id="cd01998">
    <property type="entry name" value="MnmA_TRMU-like"/>
    <property type="match status" value="1"/>
</dbReference>
<dbReference type="FunFam" id="2.30.30.280:FF:000001">
    <property type="entry name" value="tRNA-specific 2-thiouridylase MnmA"/>
    <property type="match status" value="1"/>
</dbReference>
<dbReference type="FunFam" id="2.40.30.10:FF:000023">
    <property type="entry name" value="tRNA-specific 2-thiouridylase MnmA"/>
    <property type="match status" value="1"/>
</dbReference>
<dbReference type="FunFam" id="3.40.50.620:FF:000004">
    <property type="entry name" value="tRNA-specific 2-thiouridylase MnmA"/>
    <property type="match status" value="1"/>
</dbReference>
<dbReference type="Gene3D" id="2.30.30.280">
    <property type="entry name" value="Adenine nucleotide alpha hydrolases-like domains"/>
    <property type="match status" value="1"/>
</dbReference>
<dbReference type="Gene3D" id="3.40.50.620">
    <property type="entry name" value="HUPs"/>
    <property type="match status" value="1"/>
</dbReference>
<dbReference type="Gene3D" id="2.40.30.10">
    <property type="entry name" value="Translation factors"/>
    <property type="match status" value="1"/>
</dbReference>
<dbReference type="HAMAP" id="MF_00144">
    <property type="entry name" value="tRNA_thiouridyl_MnmA"/>
    <property type="match status" value="1"/>
</dbReference>
<dbReference type="InterPro" id="IPR004506">
    <property type="entry name" value="MnmA-like"/>
</dbReference>
<dbReference type="InterPro" id="IPR046885">
    <property type="entry name" value="MnmA-like_C"/>
</dbReference>
<dbReference type="InterPro" id="IPR046884">
    <property type="entry name" value="MnmA-like_central"/>
</dbReference>
<dbReference type="InterPro" id="IPR023382">
    <property type="entry name" value="MnmA-like_central_sf"/>
</dbReference>
<dbReference type="InterPro" id="IPR014729">
    <property type="entry name" value="Rossmann-like_a/b/a_fold"/>
</dbReference>
<dbReference type="NCBIfam" id="NF001138">
    <property type="entry name" value="PRK00143.1"/>
    <property type="match status" value="1"/>
</dbReference>
<dbReference type="NCBIfam" id="TIGR00420">
    <property type="entry name" value="trmU"/>
    <property type="match status" value="1"/>
</dbReference>
<dbReference type="PANTHER" id="PTHR11933:SF5">
    <property type="entry name" value="MITOCHONDRIAL TRNA-SPECIFIC 2-THIOURIDYLASE 1"/>
    <property type="match status" value="1"/>
</dbReference>
<dbReference type="PANTHER" id="PTHR11933">
    <property type="entry name" value="TRNA 5-METHYLAMINOMETHYL-2-THIOURIDYLATE -METHYLTRANSFERASE"/>
    <property type="match status" value="1"/>
</dbReference>
<dbReference type="Pfam" id="PF03054">
    <property type="entry name" value="tRNA_Me_trans"/>
    <property type="match status" value="1"/>
</dbReference>
<dbReference type="Pfam" id="PF20258">
    <property type="entry name" value="tRNA_Me_trans_C"/>
    <property type="match status" value="1"/>
</dbReference>
<dbReference type="Pfam" id="PF20259">
    <property type="entry name" value="tRNA_Me_trans_M"/>
    <property type="match status" value="1"/>
</dbReference>
<dbReference type="SUPFAM" id="SSF52402">
    <property type="entry name" value="Adenine nucleotide alpha hydrolases-like"/>
    <property type="match status" value="1"/>
</dbReference>
<evidence type="ECO:0000255" key="1">
    <source>
        <dbReference type="HAMAP-Rule" id="MF_00144"/>
    </source>
</evidence>
<comment type="function">
    <text evidence="1">Catalyzes the 2-thiolation of uridine at the wobble position (U34) of tRNA(Lys), tRNA(Glu) and tRNA(Gln), leading to the formation of s(2)U34, the first step of tRNA-mnm(5)s(2)U34 synthesis. Sulfur is provided by IscS, via a sulfur-relay system. Binds ATP and its substrate tRNAs.</text>
</comment>
<comment type="catalytic activity">
    <reaction evidence="1">
        <text>S-sulfanyl-L-cysteinyl-[protein] + uridine(34) in tRNA + AH2 + ATP = 2-thiouridine(34) in tRNA + L-cysteinyl-[protein] + A + AMP + diphosphate + H(+)</text>
        <dbReference type="Rhea" id="RHEA:47032"/>
        <dbReference type="Rhea" id="RHEA-COMP:10131"/>
        <dbReference type="Rhea" id="RHEA-COMP:11726"/>
        <dbReference type="Rhea" id="RHEA-COMP:11727"/>
        <dbReference type="Rhea" id="RHEA-COMP:11728"/>
        <dbReference type="ChEBI" id="CHEBI:13193"/>
        <dbReference type="ChEBI" id="CHEBI:15378"/>
        <dbReference type="ChEBI" id="CHEBI:17499"/>
        <dbReference type="ChEBI" id="CHEBI:29950"/>
        <dbReference type="ChEBI" id="CHEBI:30616"/>
        <dbReference type="ChEBI" id="CHEBI:33019"/>
        <dbReference type="ChEBI" id="CHEBI:61963"/>
        <dbReference type="ChEBI" id="CHEBI:65315"/>
        <dbReference type="ChEBI" id="CHEBI:87170"/>
        <dbReference type="ChEBI" id="CHEBI:456215"/>
        <dbReference type="EC" id="2.8.1.13"/>
    </reaction>
</comment>
<comment type="subunit">
    <text evidence="1">Interacts with TusE.</text>
</comment>
<comment type="subcellular location">
    <subcellularLocation>
        <location evidence="1">Cytoplasm</location>
    </subcellularLocation>
</comment>
<comment type="similarity">
    <text evidence="1">Belongs to the MnmA/TRMU family.</text>
</comment>
<feature type="chain" id="PRO_1000009578" description="tRNA-specific 2-thiouridylase MnmA">
    <location>
        <begin position="1"/>
        <end position="369"/>
    </location>
</feature>
<feature type="region of interest" description="Interaction with target base in tRNA" evidence="1">
    <location>
        <begin position="98"/>
        <end position="100"/>
    </location>
</feature>
<feature type="region of interest" description="Interaction with tRNA" evidence="1">
    <location>
        <begin position="150"/>
        <end position="152"/>
    </location>
</feature>
<feature type="region of interest" description="Interaction with tRNA" evidence="1">
    <location>
        <begin position="312"/>
        <end position="313"/>
    </location>
</feature>
<feature type="active site" description="Nucleophile" evidence="1">
    <location>
        <position position="103"/>
    </location>
</feature>
<feature type="active site" description="Cysteine persulfide intermediate" evidence="1">
    <location>
        <position position="200"/>
    </location>
</feature>
<feature type="binding site" evidence="1">
    <location>
        <begin position="12"/>
        <end position="19"/>
    </location>
    <ligand>
        <name>ATP</name>
        <dbReference type="ChEBI" id="CHEBI:30616"/>
    </ligand>
</feature>
<feature type="binding site" evidence="1">
    <location>
        <position position="38"/>
    </location>
    <ligand>
        <name>ATP</name>
        <dbReference type="ChEBI" id="CHEBI:30616"/>
    </ligand>
</feature>
<feature type="binding site" evidence="1">
    <location>
        <position position="128"/>
    </location>
    <ligand>
        <name>ATP</name>
        <dbReference type="ChEBI" id="CHEBI:30616"/>
    </ligand>
</feature>
<feature type="site" description="Interaction with tRNA" evidence="1">
    <location>
        <position position="129"/>
    </location>
</feature>
<feature type="site" description="Interaction with tRNA" evidence="1">
    <location>
        <position position="345"/>
    </location>
</feature>
<feature type="disulfide bond" description="Alternate" evidence="1">
    <location>
        <begin position="103"/>
        <end position="200"/>
    </location>
</feature>
<keyword id="KW-0067">ATP-binding</keyword>
<keyword id="KW-0963">Cytoplasm</keyword>
<keyword id="KW-1015">Disulfide bond</keyword>
<keyword id="KW-0547">Nucleotide-binding</keyword>
<keyword id="KW-0694">RNA-binding</keyword>
<keyword id="KW-0808">Transferase</keyword>
<keyword id="KW-0819">tRNA processing</keyword>
<keyword id="KW-0820">tRNA-binding</keyword>
<sequence>MSDNGQKKVIVGMSGGVDSSVSAWLLQQQGYRVEGLFMKNWEEDDNEEYCTAASDLADARAVCDTLGIALHTVNFAAEYWDNVFAHFLAEYQVGRTPNPDILCNKEIKFKAFLEFADDDLGADYIATGHYVRRADVNGKSRLLRGLDDNKDQSYFLYTLGHAQLARCLFPIGELAKPEVRRIAADLGLATAAKKDSTGICFIGERKFRDFLGRYLPVQPGAIVSVDGQEVGRHQGLMYHTLGQRKGLGIGGTRDGSEDPWYVVDKDLDHNRLIVAQGHQHPRLMSTGLTAGQLHWVEREPLTEALRCTVKIRYRQPDIACLVTPQADGRLQVTFDQPVTAVTPGQSAVFYLAERCLGGGIIEARQPLSH</sequence>
<organism>
    <name type="scientific">Sodalis glossinidius (strain morsitans)</name>
    <dbReference type="NCBI Taxonomy" id="343509"/>
    <lineage>
        <taxon>Bacteria</taxon>
        <taxon>Pseudomonadati</taxon>
        <taxon>Pseudomonadota</taxon>
        <taxon>Gammaproteobacteria</taxon>
        <taxon>Enterobacterales</taxon>
        <taxon>Bruguierivoracaceae</taxon>
        <taxon>Sodalis</taxon>
    </lineage>
</organism>
<accession>Q2NU15</accession>
<proteinExistence type="inferred from homology"/>
<reference key="1">
    <citation type="journal article" date="2006" name="Genome Res.">
        <title>Massive genome erosion and functional adaptations provide insights into the symbiotic lifestyle of Sodalis glossinidius in the tsetse host.</title>
        <authorList>
            <person name="Toh H."/>
            <person name="Weiss B.L."/>
            <person name="Perkin S.A.H."/>
            <person name="Yamashita A."/>
            <person name="Oshima K."/>
            <person name="Hattori M."/>
            <person name="Aksoy S."/>
        </authorList>
    </citation>
    <scope>NUCLEOTIDE SEQUENCE [LARGE SCALE GENOMIC DNA]</scope>
    <source>
        <strain>morsitans</strain>
    </source>
</reference>
<name>MNMA_SODGM</name>
<protein>
    <recommendedName>
        <fullName evidence="1">tRNA-specific 2-thiouridylase MnmA</fullName>
        <ecNumber evidence="1">2.8.1.13</ecNumber>
    </recommendedName>
</protein>